<accession>B0RU99</accession>
<reference key="1">
    <citation type="journal article" date="2008" name="J. Biotechnol.">
        <title>The genome of Xanthomonas campestris pv. campestris B100 and its use for the reconstruction of metabolic pathways involved in xanthan biosynthesis.</title>
        <authorList>
            <person name="Vorhoelter F.-J."/>
            <person name="Schneiker S."/>
            <person name="Goesmann A."/>
            <person name="Krause L."/>
            <person name="Bekel T."/>
            <person name="Kaiser O."/>
            <person name="Linke B."/>
            <person name="Patschkowski T."/>
            <person name="Rueckert C."/>
            <person name="Schmid J."/>
            <person name="Sidhu V.K."/>
            <person name="Sieber V."/>
            <person name="Tauch A."/>
            <person name="Watt S.A."/>
            <person name="Weisshaar B."/>
            <person name="Becker A."/>
            <person name="Niehaus K."/>
            <person name="Puehler A."/>
        </authorList>
    </citation>
    <scope>NUCLEOTIDE SEQUENCE [LARGE SCALE GENOMIC DNA]</scope>
    <source>
        <strain>B100</strain>
    </source>
</reference>
<protein>
    <recommendedName>
        <fullName evidence="1">Large ribosomal subunit protein bL25</fullName>
    </recommendedName>
    <alternativeName>
        <fullName evidence="2">50S ribosomal protein L25</fullName>
    </alternativeName>
    <alternativeName>
        <fullName evidence="1">General stress protein CTC</fullName>
    </alternativeName>
</protein>
<sequence length="209" mass="23110">MAKTHEIKVERRADEGKGASRRLRHAGVIPAIVYGGELEPVSIQLNHEQIWLAQQNEWFYSSILDLNLNGDVQQVLLRDMQRHPFKQLIMHIDFQRVSANEKLSASVPLHFINEASSPAGKSSEVVVTHELNEVQVVCLPKDLPEFIEIDLSTLEVGAVIHLSEITLPAGVEIPELKLGKEHDVAVVIAKHGQVEADDVADEAAEGDAK</sequence>
<name>RL25_XANCB</name>
<keyword id="KW-0687">Ribonucleoprotein</keyword>
<keyword id="KW-0689">Ribosomal protein</keyword>
<keyword id="KW-0694">RNA-binding</keyword>
<keyword id="KW-0699">rRNA-binding</keyword>
<evidence type="ECO:0000255" key="1">
    <source>
        <dbReference type="HAMAP-Rule" id="MF_01334"/>
    </source>
</evidence>
<evidence type="ECO:0000305" key="2"/>
<organism>
    <name type="scientific">Xanthomonas campestris pv. campestris (strain B100)</name>
    <dbReference type="NCBI Taxonomy" id="509169"/>
    <lineage>
        <taxon>Bacteria</taxon>
        <taxon>Pseudomonadati</taxon>
        <taxon>Pseudomonadota</taxon>
        <taxon>Gammaproteobacteria</taxon>
        <taxon>Lysobacterales</taxon>
        <taxon>Lysobacteraceae</taxon>
        <taxon>Xanthomonas</taxon>
    </lineage>
</organism>
<dbReference type="EMBL" id="AM920689">
    <property type="protein sequence ID" value="CAP52841.1"/>
    <property type="molecule type" value="Genomic_DNA"/>
</dbReference>
<dbReference type="SMR" id="B0RU99"/>
<dbReference type="KEGG" id="xca:xcc-b100_3476"/>
<dbReference type="HOGENOM" id="CLU_075939_0_1_6"/>
<dbReference type="Proteomes" id="UP000001188">
    <property type="component" value="Chromosome"/>
</dbReference>
<dbReference type="GO" id="GO:0022625">
    <property type="term" value="C:cytosolic large ribosomal subunit"/>
    <property type="evidence" value="ECO:0007669"/>
    <property type="project" value="TreeGrafter"/>
</dbReference>
<dbReference type="GO" id="GO:0008097">
    <property type="term" value="F:5S rRNA binding"/>
    <property type="evidence" value="ECO:0007669"/>
    <property type="project" value="InterPro"/>
</dbReference>
<dbReference type="GO" id="GO:0003735">
    <property type="term" value="F:structural constituent of ribosome"/>
    <property type="evidence" value="ECO:0007669"/>
    <property type="project" value="InterPro"/>
</dbReference>
<dbReference type="GO" id="GO:0006412">
    <property type="term" value="P:translation"/>
    <property type="evidence" value="ECO:0007669"/>
    <property type="project" value="UniProtKB-UniRule"/>
</dbReference>
<dbReference type="CDD" id="cd00495">
    <property type="entry name" value="Ribosomal_L25_TL5_CTC"/>
    <property type="match status" value="1"/>
</dbReference>
<dbReference type="FunFam" id="2.40.240.10:FF:000002">
    <property type="entry name" value="50S ribosomal protein L25"/>
    <property type="match status" value="1"/>
</dbReference>
<dbReference type="Gene3D" id="2.170.120.20">
    <property type="entry name" value="Ribosomal protein L25, beta domain"/>
    <property type="match status" value="1"/>
</dbReference>
<dbReference type="Gene3D" id="2.40.240.10">
    <property type="entry name" value="Ribosomal Protein L25, Chain P"/>
    <property type="match status" value="1"/>
</dbReference>
<dbReference type="HAMAP" id="MF_01336">
    <property type="entry name" value="Ribosomal_bL25"/>
    <property type="match status" value="1"/>
</dbReference>
<dbReference type="HAMAP" id="MF_01334">
    <property type="entry name" value="Ribosomal_bL25_CTC"/>
    <property type="match status" value="1"/>
</dbReference>
<dbReference type="InterPro" id="IPR020056">
    <property type="entry name" value="Rbsml_bL25/Gln-tRNA_synth_N"/>
</dbReference>
<dbReference type="InterPro" id="IPR011035">
    <property type="entry name" value="Ribosomal_bL25/Gln-tRNA_synth"/>
</dbReference>
<dbReference type="InterPro" id="IPR020057">
    <property type="entry name" value="Ribosomal_bL25_b-dom"/>
</dbReference>
<dbReference type="InterPro" id="IPR037121">
    <property type="entry name" value="Ribosomal_bL25_C"/>
</dbReference>
<dbReference type="InterPro" id="IPR001021">
    <property type="entry name" value="Ribosomal_bL25_long"/>
</dbReference>
<dbReference type="InterPro" id="IPR020055">
    <property type="entry name" value="Ribosomal_bL25_short"/>
</dbReference>
<dbReference type="InterPro" id="IPR029751">
    <property type="entry name" value="Ribosomal_L25_dom"/>
</dbReference>
<dbReference type="InterPro" id="IPR020930">
    <property type="entry name" value="Ribosomal_uL5_bac-type"/>
</dbReference>
<dbReference type="NCBIfam" id="TIGR00731">
    <property type="entry name" value="bL25_bact_ctc"/>
    <property type="match status" value="1"/>
</dbReference>
<dbReference type="NCBIfam" id="NF004128">
    <property type="entry name" value="PRK05618.1-2"/>
    <property type="match status" value="1"/>
</dbReference>
<dbReference type="NCBIfam" id="NF004130">
    <property type="entry name" value="PRK05618.1-5"/>
    <property type="match status" value="1"/>
</dbReference>
<dbReference type="NCBIfam" id="NF004612">
    <property type="entry name" value="PRK05943.1"/>
    <property type="match status" value="1"/>
</dbReference>
<dbReference type="PANTHER" id="PTHR33284">
    <property type="entry name" value="RIBOSOMAL PROTEIN L25/GLN-TRNA SYNTHETASE, ANTI-CODON-BINDING DOMAIN-CONTAINING PROTEIN"/>
    <property type="match status" value="1"/>
</dbReference>
<dbReference type="PANTHER" id="PTHR33284:SF1">
    <property type="entry name" value="RIBOSOMAL PROTEIN L25_GLN-TRNA SYNTHETASE, ANTI-CODON-BINDING DOMAIN-CONTAINING PROTEIN"/>
    <property type="match status" value="1"/>
</dbReference>
<dbReference type="Pfam" id="PF01386">
    <property type="entry name" value="Ribosomal_L25p"/>
    <property type="match status" value="1"/>
</dbReference>
<dbReference type="Pfam" id="PF14693">
    <property type="entry name" value="Ribosomal_TL5_C"/>
    <property type="match status" value="1"/>
</dbReference>
<dbReference type="SUPFAM" id="SSF50715">
    <property type="entry name" value="Ribosomal protein L25-like"/>
    <property type="match status" value="1"/>
</dbReference>
<feature type="chain" id="PRO_1000142563" description="Large ribosomal subunit protein bL25">
    <location>
        <begin position="1"/>
        <end position="209"/>
    </location>
</feature>
<comment type="function">
    <text evidence="1">This is one of the proteins that binds to the 5S RNA in the ribosome where it forms part of the central protuberance.</text>
</comment>
<comment type="subunit">
    <text evidence="1">Part of the 50S ribosomal subunit; part of the 5S rRNA/L5/L18/L25 subcomplex. Contacts the 5S rRNA. Binds to the 5S rRNA independently of L5 and L18.</text>
</comment>
<comment type="similarity">
    <text evidence="1">Belongs to the bacterial ribosomal protein bL25 family. CTC subfamily.</text>
</comment>
<proteinExistence type="inferred from homology"/>
<gene>
    <name evidence="1" type="primary">rplY</name>
    <name evidence="1" type="synonym">ctc</name>
    <name type="ordered locus">xcc-b100_3476</name>
</gene>